<dbReference type="EC" id="2.8.1.3" evidence="8"/>
<dbReference type="EMBL" id="AF439442">
    <property type="protein sequence ID" value="AAM69839.1"/>
    <property type="molecule type" value="Genomic_DNA"/>
</dbReference>
<dbReference type="EMBL" id="AF439442">
    <property type="protein sequence ID" value="AAM69840.1"/>
    <property type="molecule type" value="Genomic_DNA"/>
</dbReference>
<dbReference type="EMBL" id="AL591806">
    <property type="status" value="NOT_ANNOTATED_CDS"/>
    <property type="molecule type" value="Genomic_DNA"/>
</dbReference>
<dbReference type="EMBL" id="BC001699">
    <property type="protein sequence ID" value="AAH01699.1"/>
    <property type="status" value="ALT_INIT"/>
    <property type="molecule type" value="mRNA"/>
</dbReference>
<dbReference type="CCDS" id="CCDS44257.1">
    <molecule id="Q8NFU3-2"/>
</dbReference>
<dbReference type="CCDS" id="CCDS44258.1">
    <molecule id="Q8NFU3-3"/>
</dbReference>
<dbReference type="CCDS" id="CCDS53400.1">
    <molecule id="Q8NFU3-1"/>
</dbReference>
<dbReference type="RefSeq" id="NP_001106676.1">
    <molecule id="Q8NFU3-3"/>
    <property type="nucleotide sequence ID" value="NM_001113205.2"/>
</dbReference>
<dbReference type="RefSeq" id="NP_001106677.1">
    <molecule id="Q8NFU3-2"/>
    <property type="nucleotide sequence ID" value="NM_001113206.2"/>
</dbReference>
<dbReference type="RefSeq" id="NP_001106678.1">
    <molecule id="Q8NFU3-1"/>
    <property type="nucleotide sequence ID" value="NM_001113207.2"/>
</dbReference>
<dbReference type="PDB" id="6BEV">
    <property type="method" value="X-ray"/>
    <property type="resolution" value="1.04 A"/>
    <property type="chains" value="A/B=1-115"/>
</dbReference>
<dbReference type="PDBsum" id="6BEV"/>
<dbReference type="SMR" id="Q8NFU3"/>
<dbReference type="BioGRID" id="756073">
    <property type="interactions" value="15"/>
</dbReference>
<dbReference type="FunCoup" id="Q8NFU3">
    <property type="interactions" value="431"/>
</dbReference>
<dbReference type="STRING" id="9606.ENSP00000388293"/>
<dbReference type="DrugBank" id="DB09499">
    <property type="generic name" value="Thiosulfuric acid"/>
</dbReference>
<dbReference type="GlyGen" id="Q8NFU3">
    <property type="glycosylation" value="1 site"/>
</dbReference>
<dbReference type="iPTMnet" id="Q8NFU3"/>
<dbReference type="PhosphoSitePlus" id="Q8NFU3"/>
<dbReference type="SwissPalm" id="Q8NFU3"/>
<dbReference type="BioMuta" id="TSTD1"/>
<dbReference type="DMDM" id="68051988"/>
<dbReference type="jPOST" id="Q8NFU3"/>
<dbReference type="MassIVE" id="Q8NFU3"/>
<dbReference type="PaxDb" id="9606-ENSP00000388293"/>
<dbReference type="PeptideAtlas" id="Q8NFU3"/>
<dbReference type="ProteomicsDB" id="73357">
    <molecule id="Q8NFU3-1"/>
</dbReference>
<dbReference type="ProteomicsDB" id="73358">
    <molecule id="Q8NFU3-2"/>
</dbReference>
<dbReference type="ProteomicsDB" id="73359">
    <molecule id="Q8NFU3-3"/>
</dbReference>
<dbReference type="ProteomicsDB" id="73360">
    <molecule id="Q8NFU3-4"/>
</dbReference>
<dbReference type="Pumba" id="Q8NFU3"/>
<dbReference type="TopDownProteomics" id="Q8NFU3-1">
    <molecule id="Q8NFU3-1"/>
</dbReference>
<dbReference type="Antibodypedia" id="34285">
    <property type="antibodies" value="14 antibodies from 9 providers"/>
</dbReference>
<dbReference type="DNASU" id="100131187"/>
<dbReference type="Ensembl" id="ENST00000318289.14">
    <molecule id="Q8NFU3-3"/>
    <property type="protein sequence ID" value="ENSP00000325518.10"/>
    <property type="gene ID" value="ENSG00000215845.11"/>
</dbReference>
<dbReference type="Ensembl" id="ENST00000368023.7">
    <molecule id="Q8NFU3-4"/>
    <property type="protein sequence ID" value="ENSP00000357002.3"/>
    <property type="gene ID" value="ENSG00000215845.11"/>
</dbReference>
<dbReference type="Ensembl" id="ENST00000368024.5">
    <molecule id="Q8NFU3-2"/>
    <property type="protein sequence ID" value="ENSP00000357003.1"/>
    <property type="gene ID" value="ENSG00000215845.11"/>
</dbReference>
<dbReference type="Ensembl" id="ENST00000423014.3">
    <molecule id="Q8NFU3-1"/>
    <property type="protein sequence ID" value="ENSP00000388293.2"/>
    <property type="gene ID" value="ENSG00000215845.11"/>
</dbReference>
<dbReference type="GeneID" id="100131187"/>
<dbReference type="KEGG" id="hsa:100131187"/>
<dbReference type="MANE-Select" id="ENST00000423014.3">
    <property type="protein sequence ID" value="ENSP00000388293.2"/>
    <property type="RefSeq nucleotide sequence ID" value="NM_001113207.2"/>
    <property type="RefSeq protein sequence ID" value="NP_001106678.1"/>
</dbReference>
<dbReference type="UCSC" id="uc001fxh.5">
    <molecule id="Q8NFU3-1"/>
    <property type="organism name" value="human"/>
</dbReference>
<dbReference type="AGR" id="HGNC:35410"/>
<dbReference type="CTD" id="100131187"/>
<dbReference type="DisGeNET" id="100131187"/>
<dbReference type="GeneCards" id="TSTD1"/>
<dbReference type="HGNC" id="HGNC:35410">
    <property type="gene designation" value="TSTD1"/>
</dbReference>
<dbReference type="HPA" id="ENSG00000215845">
    <property type="expression patterns" value="Low tissue specificity"/>
</dbReference>
<dbReference type="MalaCards" id="TSTD1"/>
<dbReference type="MIM" id="616041">
    <property type="type" value="gene"/>
</dbReference>
<dbReference type="neXtProt" id="NX_Q8NFU3"/>
<dbReference type="OpenTargets" id="ENSG00000215845"/>
<dbReference type="PharmGKB" id="PA165752768"/>
<dbReference type="VEuPathDB" id="HostDB:ENSG00000215845"/>
<dbReference type="eggNOG" id="KOG1530">
    <property type="taxonomic scope" value="Eukaryota"/>
</dbReference>
<dbReference type="GeneTree" id="ENSGT00940000161394"/>
<dbReference type="HOGENOM" id="CLU_2903509_0_0_1"/>
<dbReference type="InParanoid" id="Q8NFU3"/>
<dbReference type="OMA" id="FFCQMGR"/>
<dbReference type="OrthoDB" id="566238at2759"/>
<dbReference type="PAN-GO" id="Q8NFU3">
    <property type="GO annotations" value="1 GO annotation based on evolutionary models"/>
</dbReference>
<dbReference type="PhylomeDB" id="Q8NFU3"/>
<dbReference type="TreeFam" id="TF323321"/>
<dbReference type="BioCyc" id="MetaCyc:MONOMER-20304"/>
<dbReference type="BRENDA" id="2.8.1.1">
    <property type="organism ID" value="2681"/>
</dbReference>
<dbReference type="BRENDA" id="2.8.1.3">
    <property type="organism ID" value="2681"/>
</dbReference>
<dbReference type="PathwayCommons" id="Q8NFU3"/>
<dbReference type="Reactome" id="R-HSA-1614517">
    <property type="pathway name" value="Sulfide oxidation to sulfate"/>
</dbReference>
<dbReference type="BioGRID-ORCS" id="100131187">
    <property type="hits" value="8 hits in 1146 CRISPR screens"/>
</dbReference>
<dbReference type="ChiTaRS" id="TSTD1">
    <property type="organism name" value="human"/>
</dbReference>
<dbReference type="GenomeRNAi" id="100131187"/>
<dbReference type="Pharos" id="Q8NFU3">
    <property type="development level" value="Tdark"/>
</dbReference>
<dbReference type="PRO" id="PR:Q8NFU3"/>
<dbReference type="Proteomes" id="UP000005640">
    <property type="component" value="Chromosome 1"/>
</dbReference>
<dbReference type="RNAct" id="Q8NFU3">
    <property type="molecule type" value="protein"/>
</dbReference>
<dbReference type="Bgee" id="ENSG00000215845">
    <property type="expression patterns" value="Expressed in parotid gland and 177 other cell types or tissues"/>
</dbReference>
<dbReference type="ExpressionAtlas" id="Q8NFU3">
    <property type="expression patterns" value="baseline and differential"/>
</dbReference>
<dbReference type="GO" id="GO:0005737">
    <property type="term" value="C:cytoplasm"/>
    <property type="evidence" value="ECO:0000314"/>
    <property type="project" value="UniProtKB"/>
</dbReference>
<dbReference type="GO" id="GO:0036464">
    <property type="term" value="C:cytoplasmic ribonucleoprotein granule"/>
    <property type="evidence" value="ECO:0000314"/>
    <property type="project" value="HPA"/>
</dbReference>
<dbReference type="GO" id="GO:0005829">
    <property type="term" value="C:cytosol"/>
    <property type="evidence" value="ECO:0000314"/>
    <property type="project" value="HPA"/>
</dbReference>
<dbReference type="GO" id="GO:0048471">
    <property type="term" value="C:perinuclear region of cytoplasm"/>
    <property type="evidence" value="ECO:0007669"/>
    <property type="project" value="UniProtKB-SubCell"/>
</dbReference>
<dbReference type="GO" id="GO:0050337">
    <property type="term" value="F:thiosulfate-thiol sulfurtransferase activity"/>
    <property type="evidence" value="ECO:0000304"/>
    <property type="project" value="Reactome"/>
</dbReference>
<dbReference type="GO" id="GO:0070221">
    <property type="term" value="P:sulfide oxidation, using sulfide:quinone oxidoreductase"/>
    <property type="evidence" value="ECO:0000304"/>
    <property type="project" value="Reactome"/>
</dbReference>
<dbReference type="FunFam" id="3.40.250.10:FF:000031">
    <property type="entry name" value="Thiosulfate sulfurtransferase like domain containing 1"/>
    <property type="match status" value="1"/>
</dbReference>
<dbReference type="Gene3D" id="3.40.250.10">
    <property type="entry name" value="Rhodanese-like domain"/>
    <property type="match status" value="1"/>
</dbReference>
<dbReference type="InterPro" id="IPR001763">
    <property type="entry name" value="Rhodanese-like_dom"/>
</dbReference>
<dbReference type="InterPro" id="IPR036873">
    <property type="entry name" value="Rhodanese-like_dom_sf"/>
</dbReference>
<dbReference type="InterPro" id="IPR042457">
    <property type="entry name" value="TSTD1_mml"/>
</dbReference>
<dbReference type="PANTHER" id="PTHR45544">
    <property type="entry name" value="THIOSULFATE:GLUTATHIONE SULFURTRANSFERASE"/>
    <property type="match status" value="1"/>
</dbReference>
<dbReference type="PANTHER" id="PTHR45544:SF1">
    <property type="entry name" value="THIOSULFATE:GLUTATHIONE SULFURTRANSFERASE"/>
    <property type="match status" value="1"/>
</dbReference>
<dbReference type="Pfam" id="PF00581">
    <property type="entry name" value="Rhodanese"/>
    <property type="match status" value="1"/>
</dbReference>
<dbReference type="SMART" id="SM00450">
    <property type="entry name" value="RHOD"/>
    <property type="match status" value="1"/>
</dbReference>
<dbReference type="SUPFAM" id="SSF52821">
    <property type="entry name" value="Rhodanese/Cell cycle control phosphatase"/>
    <property type="match status" value="1"/>
</dbReference>
<dbReference type="PROSITE" id="PS50206">
    <property type="entry name" value="RHODANESE_3"/>
    <property type="match status" value="1"/>
</dbReference>
<sequence>MAGAPTVSLPELRSLLASGRARLFDVRSREEAAAGTIPGALNIPVSELESALQMEPAAFQALYSAEKPKLEDEHLVFFCQMGKRGLQATQLARSLGYTGARNYAGAYREWLEKES</sequence>
<keyword id="KW-0002">3D-structure</keyword>
<keyword id="KW-0025">Alternative splicing</keyword>
<keyword id="KW-0963">Cytoplasm</keyword>
<keyword id="KW-0903">Direct protein sequencing</keyword>
<keyword id="KW-1267">Proteomics identification</keyword>
<keyword id="KW-1185">Reference proteome</keyword>
<keyword id="KW-0808">Transferase</keyword>
<organism>
    <name type="scientific">Homo sapiens</name>
    <name type="common">Human</name>
    <dbReference type="NCBI Taxonomy" id="9606"/>
    <lineage>
        <taxon>Eukaryota</taxon>
        <taxon>Metazoa</taxon>
        <taxon>Chordata</taxon>
        <taxon>Craniata</taxon>
        <taxon>Vertebrata</taxon>
        <taxon>Euteleostomi</taxon>
        <taxon>Mammalia</taxon>
        <taxon>Eutheria</taxon>
        <taxon>Euarchontoglires</taxon>
        <taxon>Primates</taxon>
        <taxon>Haplorrhini</taxon>
        <taxon>Catarrhini</taxon>
        <taxon>Hominidae</taxon>
        <taxon>Homo</taxon>
    </lineage>
</organism>
<proteinExistence type="evidence at protein level"/>
<feature type="chain" id="PRO_0000139423" description="Thiosulfate:glutathione sulfurtransferase">
    <location>
        <begin position="1"/>
        <end position="115"/>
    </location>
</feature>
<feature type="domain" description="Rhodanese" evidence="1">
    <location>
        <begin position="17"/>
        <end position="115"/>
    </location>
</feature>
<feature type="active site" description="Cysteine persulfide intermediate" evidence="1 4">
    <location>
        <position position="79"/>
    </location>
</feature>
<feature type="splice variant" id="VSP_014151" description="In isoform 4." evidence="8">
    <original>G</original>
    <variation>GGCRAPSS</variation>
    <location>
        <position position="3"/>
    </location>
</feature>
<feature type="splice variant" id="VSP_014152" description="In isoform 2." evidence="8">
    <location>
        <begin position="4"/>
        <end position="44"/>
    </location>
</feature>
<feature type="splice variant" id="VSP_014153" description="In isoform 3." evidence="6">
    <original>ARNYAGAYREWLEKES</original>
    <variation>YGEVWLLAGR</variation>
    <location>
        <begin position="100"/>
        <end position="115"/>
    </location>
</feature>
<feature type="mutagenesis site" description="Leads to the loss of catalytic activity." evidence="4">
    <original>C</original>
    <variation>A</variation>
    <variation>S</variation>
    <location>
        <position position="79"/>
    </location>
</feature>
<feature type="helix" evidence="10">
    <location>
        <begin position="9"/>
        <end position="17"/>
    </location>
</feature>
<feature type="strand" evidence="10">
    <location>
        <begin position="22"/>
        <end position="25"/>
    </location>
</feature>
<feature type="helix" evidence="10">
    <location>
        <begin position="29"/>
        <end position="33"/>
    </location>
</feature>
<feature type="helix" evidence="10">
    <location>
        <begin position="45"/>
        <end position="53"/>
    </location>
</feature>
<feature type="helix" evidence="10">
    <location>
        <begin position="56"/>
        <end position="63"/>
    </location>
</feature>
<feature type="strand" evidence="10">
    <location>
        <begin position="75"/>
        <end position="78"/>
    </location>
</feature>
<feature type="strand" evidence="10">
    <location>
        <begin position="80"/>
        <end position="82"/>
    </location>
</feature>
<feature type="helix" evidence="10">
    <location>
        <begin position="83"/>
        <end position="94"/>
    </location>
</feature>
<feature type="strand" evidence="10">
    <location>
        <begin position="100"/>
        <end position="102"/>
    </location>
</feature>
<feature type="helix" evidence="10">
    <location>
        <begin position="106"/>
        <end position="113"/>
    </location>
</feature>
<comment type="function">
    <text evidence="4 8">Thiosulfate:glutathione sulfurtransferase (TST) required to produce S-sulfanylglutathione (GSS(-)), a central intermediate in hydrogen sulfide metabolism (PubMed:24981631). Provides the link between the first step in mammalian H(2)S metabolism performed by the sulfide:quinone oxidoreductase (SQOR) which catalyzes the conversion of H(2)S to thiosulfate, and the sulfur dioxygenase (SDO) which uses GSS(-) as substrate (PubMed:24981631). The thermodynamic coupling of the irreversible SDO and reversible TST reactions provides a model for the physiologically relevant reaction with thiosulfate as the sulfane donor (PubMed:24981631). GSS(-) spontaneously reacts with glutathione to form glutathione disulfide (Probable).</text>
</comment>
<comment type="catalytic activity">
    <reaction evidence="4">
        <text>thiosulfate + glutathione = S-sulfanylglutathione + sulfite + H(+)</text>
        <dbReference type="Rhea" id="RHEA:55976"/>
        <dbReference type="ChEBI" id="CHEBI:15378"/>
        <dbReference type="ChEBI" id="CHEBI:17359"/>
        <dbReference type="ChEBI" id="CHEBI:33542"/>
        <dbReference type="ChEBI" id="CHEBI:57925"/>
        <dbReference type="ChEBI" id="CHEBI:58905"/>
    </reaction>
</comment>
<comment type="catalytic activity">
    <reaction evidence="8">
        <text>thiosulfate + 2 glutathione = glutathione disulfide + hydrogen sulfide + sulfite + 2 H(+)</text>
        <dbReference type="Rhea" id="RHEA:14505"/>
        <dbReference type="ChEBI" id="CHEBI:15378"/>
        <dbReference type="ChEBI" id="CHEBI:17359"/>
        <dbReference type="ChEBI" id="CHEBI:29919"/>
        <dbReference type="ChEBI" id="CHEBI:33542"/>
        <dbReference type="ChEBI" id="CHEBI:57925"/>
        <dbReference type="ChEBI" id="CHEBI:58297"/>
        <dbReference type="EC" id="2.8.1.3"/>
    </reaction>
</comment>
<comment type="activity regulation">
    <text evidence="4">GSS(-) is a potent inhibitor of TSTD1, since the presence of the sulfur dioxygenase (SDO) strongly increases the TSTD1 catalytic activity (PubMed:24981631).</text>
</comment>
<comment type="biophysicochemical properties">
    <kinetics>
        <KM evidence="4">1 mM for glutathione</KM>
        <KM evidence="4">14 mM for thiosulfate</KM>
        <KM evidence="4">0.04 mM for glutathione (in the presence of sulfur dioxygenase)</KM>
        <KM evidence="4">10.7 mM for thiosulfate (in the presence of sulfur dioxygenase)</KM>
        <KM evidence="4">11 mM for thiosulfate (when glutathione is the acceptor)</KM>
        <KM evidence="4">10.4 mM for thiosulfate (when cystein is the acceptor)</KM>
        <KM evidence="4">36 mM for thiosulfate (when coenzyme A is the acceptor)</KM>
        <KM evidence="4">14.01 mM for thiosulfate (when DTT is the acceptor)</KM>
        <KM evidence="4">12 mM for thiosulfate (when cyanide is the acceptor)</KM>
        <KM evidence="4">1.7 mM for glutathione (when thiosulfate is the acceptor)</KM>
        <KM evidence="4">2.5 mM for cystein (when thiosulfate is the acceptor)</KM>
        <KM evidence="4">0.09 mM for coenzyme A (when thiosulfate is the acceptor)</KM>
        <KM evidence="4">0.12 mM for DTT (when thiosulfate is the acceptor)</KM>
        <KM evidence="4">0.22 mM for cyanide (when thiosulfate is the acceptor)</KM>
    </kinetics>
</comment>
<comment type="subcellular location">
    <subcellularLocation>
        <location evidence="3">Cytoplasm</location>
        <location evidence="3">Perinuclear region</location>
    </subcellularLocation>
    <text>Localized around the nuclear membranes.</text>
</comment>
<comment type="alternative products">
    <event type="alternative splicing"/>
    <isoform>
        <id>Q8NFU3-1</id>
        <name evidence="3">1</name>
        <sequence type="displayed"/>
    </isoform>
    <isoform>
        <id>Q8NFU3-2</id>
        <name evidence="3">2</name>
        <sequence type="described" ref="VSP_014152"/>
    </isoform>
    <isoform>
        <id>Q8NFU3-3</id>
        <name evidence="5">3</name>
        <sequence type="described" ref="VSP_014153"/>
    </isoform>
    <isoform>
        <id>Q8NFU3-4</id>
        <name>4</name>
        <sequence type="described" ref="VSP_014151"/>
    </isoform>
</comment>
<comment type="tissue specificity">
    <text evidence="3">Highly expressed in kidney, liver and skeletal muscle. Lower levels of expression in heart, colon, thymus, spleen, placenta and lung. Weakly expressed in brain, small intestine and peripheral blood leukocytes. Expressed at high levels in the breast carcinoma cell lines MCF-7 and MDA-MB-468 and at a lower level in the breast carcinoma cell line MDA-MB-231, the colon carcinoma call line LoVo and the lung carcinoma cell line A-549. No expression in the cell lines EFO-27 and HeLa, or the normal breast tissue cell lines MCF-10A and H184A1. Detected in invasive ductal carcinoma, but not in the adjacent tissues.</text>
</comment>
<comment type="sequence caution" evidence="8">
    <conflict type="erroneous initiation">
        <sequence resource="EMBL-CDS" id="AAH01699"/>
    </conflict>
</comment>
<reference key="1">
    <citation type="journal article" date="2003" name="Biol. Chem.">
        <title>Identification and characterization of KAT, a novel gene preferentially expressed in several human cancer cell lines.</title>
        <authorList>
            <person name="Wenzel K."/>
            <person name="Felix S.B."/>
            <person name="Flachmeier C."/>
            <person name="Heere P."/>
            <person name="Schulze W."/>
            <person name="Grunewald I."/>
            <person name="Pankow H."/>
            <person name="Hewelt A."/>
            <person name="Scherneck S."/>
            <person name="Bauer D."/>
            <person name="Hoehe M.R."/>
        </authorList>
    </citation>
    <scope>NUCLEOTIDE SEQUENCE [GENOMIC DNA] (ISOFORMS 1 AND 2)</scope>
    <scope>SUBCELLULAR LOCATION</scope>
    <scope>TISSUE SPECIFICITY</scope>
</reference>
<reference key="2">
    <citation type="journal article" date="2006" name="Nature">
        <title>The DNA sequence and biological annotation of human chromosome 1.</title>
        <authorList>
            <person name="Gregory S.G."/>
            <person name="Barlow K.F."/>
            <person name="McLay K.E."/>
            <person name="Kaul R."/>
            <person name="Swarbreck D."/>
            <person name="Dunham A."/>
            <person name="Scott C.E."/>
            <person name="Howe K.L."/>
            <person name="Woodfine K."/>
            <person name="Spencer C.C.A."/>
            <person name="Jones M.C."/>
            <person name="Gillson C."/>
            <person name="Searle S."/>
            <person name="Zhou Y."/>
            <person name="Kokocinski F."/>
            <person name="McDonald L."/>
            <person name="Evans R."/>
            <person name="Phillips K."/>
            <person name="Atkinson A."/>
            <person name="Cooper R."/>
            <person name="Jones C."/>
            <person name="Hall R.E."/>
            <person name="Andrews T.D."/>
            <person name="Lloyd C."/>
            <person name="Ainscough R."/>
            <person name="Almeida J.P."/>
            <person name="Ambrose K.D."/>
            <person name="Anderson F."/>
            <person name="Andrew R.W."/>
            <person name="Ashwell R.I.S."/>
            <person name="Aubin K."/>
            <person name="Babbage A.K."/>
            <person name="Bagguley C.L."/>
            <person name="Bailey J."/>
            <person name="Beasley H."/>
            <person name="Bethel G."/>
            <person name="Bird C.P."/>
            <person name="Bray-Allen S."/>
            <person name="Brown J.Y."/>
            <person name="Brown A.J."/>
            <person name="Buckley D."/>
            <person name="Burton J."/>
            <person name="Bye J."/>
            <person name="Carder C."/>
            <person name="Chapman J.C."/>
            <person name="Clark S.Y."/>
            <person name="Clarke G."/>
            <person name="Clee C."/>
            <person name="Cobley V."/>
            <person name="Collier R.E."/>
            <person name="Corby N."/>
            <person name="Coville G.J."/>
            <person name="Davies J."/>
            <person name="Deadman R."/>
            <person name="Dunn M."/>
            <person name="Earthrowl M."/>
            <person name="Ellington A.G."/>
            <person name="Errington H."/>
            <person name="Frankish A."/>
            <person name="Frankland J."/>
            <person name="French L."/>
            <person name="Garner P."/>
            <person name="Garnett J."/>
            <person name="Gay L."/>
            <person name="Ghori M.R.J."/>
            <person name="Gibson R."/>
            <person name="Gilby L.M."/>
            <person name="Gillett W."/>
            <person name="Glithero R.J."/>
            <person name="Grafham D.V."/>
            <person name="Griffiths C."/>
            <person name="Griffiths-Jones S."/>
            <person name="Grocock R."/>
            <person name="Hammond S."/>
            <person name="Harrison E.S.I."/>
            <person name="Hart E."/>
            <person name="Haugen E."/>
            <person name="Heath P.D."/>
            <person name="Holmes S."/>
            <person name="Holt K."/>
            <person name="Howden P.J."/>
            <person name="Hunt A.R."/>
            <person name="Hunt S.E."/>
            <person name="Hunter G."/>
            <person name="Isherwood J."/>
            <person name="James R."/>
            <person name="Johnson C."/>
            <person name="Johnson D."/>
            <person name="Joy A."/>
            <person name="Kay M."/>
            <person name="Kershaw J.K."/>
            <person name="Kibukawa M."/>
            <person name="Kimberley A.M."/>
            <person name="King A."/>
            <person name="Knights A.J."/>
            <person name="Lad H."/>
            <person name="Laird G."/>
            <person name="Lawlor S."/>
            <person name="Leongamornlert D.A."/>
            <person name="Lloyd D.M."/>
            <person name="Loveland J."/>
            <person name="Lovell J."/>
            <person name="Lush M.J."/>
            <person name="Lyne R."/>
            <person name="Martin S."/>
            <person name="Mashreghi-Mohammadi M."/>
            <person name="Matthews L."/>
            <person name="Matthews N.S.W."/>
            <person name="McLaren S."/>
            <person name="Milne S."/>
            <person name="Mistry S."/>
            <person name="Moore M.J.F."/>
            <person name="Nickerson T."/>
            <person name="O'Dell C.N."/>
            <person name="Oliver K."/>
            <person name="Palmeiri A."/>
            <person name="Palmer S.A."/>
            <person name="Parker A."/>
            <person name="Patel D."/>
            <person name="Pearce A.V."/>
            <person name="Peck A.I."/>
            <person name="Pelan S."/>
            <person name="Phelps K."/>
            <person name="Phillimore B.J."/>
            <person name="Plumb R."/>
            <person name="Rajan J."/>
            <person name="Raymond C."/>
            <person name="Rouse G."/>
            <person name="Saenphimmachak C."/>
            <person name="Sehra H.K."/>
            <person name="Sheridan E."/>
            <person name="Shownkeen R."/>
            <person name="Sims S."/>
            <person name="Skuce C.D."/>
            <person name="Smith M."/>
            <person name="Steward C."/>
            <person name="Subramanian S."/>
            <person name="Sycamore N."/>
            <person name="Tracey A."/>
            <person name="Tromans A."/>
            <person name="Van Helmond Z."/>
            <person name="Wall M."/>
            <person name="Wallis J.M."/>
            <person name="White S."/>
            <person name="Whitehead S.L."/>
            <person name="Wilkinson J.E."/>
            <person name="Willey D.L."/>
            <person name="Williams H."/>
            <person name="Wilming L."/>
            <person name="Wray P.W."/>
            <person name="Wu Z."/>
            <person name="Coulson A."/>
            <person name="Vaudin M."/>
            <person name="Sulston J.E."/>
            <person name="Durbin R.M."/>
            <person name="Hubbard T."/>
            <person name="Wooster R."/>
            <person name="Dunham I."/>
            <person name="Carter N.P."/>
            <person name="McVean G."/>
            <person name="Ross M.T."/>
            <person name="Harrow J."/>
            <person name="Olson M.V."/>
            <person name="Beck S."/>
            <person name="Rogers J."/>
            <person name="Bentley D.R."/>
        </authorList>
    </citation>
    <scope>NUCLEOTIDE SEQUENCE [LARGE SCALE GENOMIC DNA]</scope>
</reference>
<reference evidence="8 9" key="3">
    <citation type="journal article" date="2004" name="Genome Res.">
        <title>The status, quality, and expansion of the NIH full-length cDNA project: the Mammalian Gene Collection (MGC).</title>
        <authorList>
            <consortium name="The MGC Project Team"/>
        </authorList>
    </citation>
    <scope>NUCLEOTIDE SEQUENCE [LARGE SCALE MRNA] (ISOFORM 3)</scope>
    <source>
        <tissue evidence="9">Lymph</tissue>
    </source>
</reference>
<reference evidence="8" key="4">
    <citation type="journal article" date="2003" name="Nat. Biotechnol.">
        <title>Exploring proteomes and analyzing protein processing by mass spectrometric identification of sorted N-terminal peptides.</title>
        <authorList>
            <person name="Gevaert K."/>
            <person name="Goethals M."/>
            <person name="Martens L."/>
            <person name="Van Damme J."/>
            <person name="Staes A."/>
            <person name="Thomas G.R."/>
            <person name="Vandekerckhove J."/>
        </authorList>
    </citation>
    <scope>PROTEIN SEQUENCE OF 2-13 (ISOFORMS 1/3)</scope>
    <source>
        <tissue evidence="2">Platelet</tissue>
    </source>
</reference>
<reference key="5">
    <citation type="journal article" date="2011" name="BMC Syst. Biol.">
        <title>Initial characterization of the human central proteome.</title>
        <authorList>
            <person name="Burkard T.R."/>
            <person name="Planyavsky M."/>
            <person name="Kaupe I."/>
            <person name="Breitwieser F.P."/>
            <person name="Buerckstuemmer T."/>
            <person name="Bennett K.L."/>
            <person name="Superti-Furga G."/>
            <person name="Colinge J."/>
        </authorList>
    </citation>
    <scope>IDENTIFICATION BY MASS SPECTROMETRY [LARGE SCALE ANALYSIS]</scope>
</reference>
<reference key="6">
    <citation type="journal article" date="2012" name="Proc. Natl. Acad. Sci. U.S.A.">
        <title>N-terminal acetylome analyses and functional insights of the N-terminal acetyltransferase NatB.</title>
        <authorList>
            <person name="Van Damme P."/>
            <person name="Lasa M."/>
            <person name="Polevoda B."/>
            <person name="Gazquez C."/>
            <person name="Elosegui-Artola A."/>
            <person name="Kim D.S."/>
            <person name="De Juan-Pardo E."/>
            <person name="Demeyer K."/>
            <person name="Hole K."/>
            <person name="Larrea E."/>
            <person name="Timmerman E."/>
            <person name="Prieto J."/>
            <person name="Arnesen T."/>
            <person name="Sherman F."/>
            <person name="Gevaert K."/>
            <person name="Aldabe R."/>
        </authorList>
    </citation>
    <scope>IDENTIFICATION BY MASS SPECTROMETRY [LARGE SCALE ANALYSIS]</scope>
</reference>
<reference key="7">
    <citation type="journal article" date="2014" name="Biochemistry">
        <title>Biosynthesis of a central intermediate in hydrogen sulfide metabolism by a novel human sulfurtransferase and its yeast ortholog.</title>
        <authorList>
            <person name="Melideo S.L."/>
            <person name="Jackson M.R."/>
            <person name="Jorns M.S."/>
        </authorList>
    </citation>
    <scope>FUNCTION</scope>
    <scope>CATALYTIC ACTIVITY</scope>
    <scope>BIOPHYSICOCHEMICAL PROPERTIES</scope>
    <scope>MUTAGENESIS OF CYS-79</scope>
    <scope>ACTIVITY REGULATION</scope>
    <scope>ACTIVE SITE</scope>
</reference>
<gene>
    <name type="primary">TSTD1</name>
    <name type="synonym">KAT</name>
</gene>
<protein>
    <recommendedName>
        <fullName evidence="7">Thiosulfate:glutathione sulfurtransferase</fullName>
        <shortName evidence="7">TST</shortName>
        <ecNumber evidence="8">2.8.1.3</ecNumber>
    </recommendedName>
</protein>
<evidence type="ECO:0000255" key="1">
    <source>
        <dbReference type="PROSITE-ProRule" id="PRU00173"/>
    </source>
</evidence>
<evidence type="ECO:0000269" key="2">
    <source>
    </source>
</evidence>
<evidence type="ECO:0000269" key="3">
    <source>
    </source>
</evidence>
<evidence type="ECO:0000269" key="4">
    <source>
    </source>
</evidence>
<evidence type="ECO:0000303" key="5">
    <source>
    </source>
</evidence>
<evidence type="ECO:0000303" key="6">
    <source>
    </source>
</evidence>
<evidence type="ECO:0000303" key="7">
    <source>
    </source>
</evidence>
<evidence type="ECO:0000305" key="8"/>
<evidence type="ECO:0000312" key="9">
    <source>
        <dbReference type="EMBL" id="AAH01699.1"/>
    </source>
</evidence>
<evidence type="ECO:0007829" key="10">
    <source>
        <dbReference type="PDB" id="6BEV"/>
    </source>
</evidence>
<accession>Q8NFU3</accession>
<accession>Q5SY48</accession>
<accession>Q5SY49</accession>
<accession>Q5SY50</accession>
<accession>Q5SY51</accession>
<accession>Q8NFU2</accession>
<accession>Q9BV22</accession>
<name>TSTD1_HUMAN</name>